<accession>Q5B5L5</accession>
<accession>C8V4P8</accession>
<comment type="function">
    <text evidence="1">Constituent of COPII-coated endoplasmic reticulum-derived transport vesicles. Required for efficient transport of a subset of secretory proteins to the Golgi. Facilitates retrograde transport from the Golgi to the endoplasmic reticulum (By similarity).</text>
</comment>
<comment type="subcellular location">
    <subcellularLocation>
        <location evidence="1">Endoplasmic reticulum membrane</location>
        <topology evidence="1">Single-pass type I membrane protein</topology>
    </subcellularLocation>
    <subcellularLocation>
        <location evidence="1">Golgi apparatus membrane</location>
        <topology evidence="1">Single-pass type I membrane protein</topology>
    </subcellularLocation>
    <text evidence="1">Recycles between endoplasmic reticulum and Golgi.</text>
</comment>
<comment type="similarity">
    <text evidence="3">Belongs to the EMP24/GP25L family.</text>
</comment>
<feature type="signal peptide" evidence="2">
    <location>
        <begin position="1"/>
        <end position="25"/>
    </location>
</feature>
<feature type="chain" id="PRO_0000237693" description="Endoplasmic reticulum vesicle protein 25">
    <location>
        <begin position="26"/>
        <end position="216"/>
    </location>
</feature>
<feature type="topological domain" description="Lumenal" evidence="2">
    <location>
        <begin position="26"/>
        <end position="185"/>
    </location>
</feature>
<feature type="transmembrane region" description="Helical" evidence="2">
    <location>
        <begin position="186"/>
        <end position="206"/>
    </location>
</feature>
<feature type="topological domain" description="Cytoplasmic" evidence="2">
    <location>
        <begin position="207"/>
        <end position="216"/>
    </location>
</feature>
<feature type="domain" description="GOLD">
    <location>
        <begin position="36"/>
        <end position="126"/>
    </location>
</feature>
<proteinExistence type="inferred from homology"/>
<keyword id="KW-0256">Endoplasmic reticulum</keyword>
<keyword id="KW-0931">ER-Golgi transport</keyword>
<keyword id="KW-0333">Golgi apparatus</keyword>
<keyword id="KW-0472">Membrane</keyword>
<keyword id="KW-0653">Protein transport</keyword>
<keyword id="KW-1185">Reference proteome</keyword>
<keyword id="KW-0732">Signal</keyword>
<keyword id="KW-0812">Transmembrane</keyword>
<keyword id="KW-1133">Transmembrane helix</keyword>
<keyword id="KW-0813">Transport</keyword>
<reference key="1">
    <citation type="journal article" date="2005" name="Nature">
        <title>Sequencing of Aspergillus nidulans and comparative analysis with A. fumigatus and A. oryzae.</title>
        <authorList>
            <person name="Galagan J.E."/>
            <person name="Calvo S.E."/>
            <person name="Cuomo C."/>
            <person name="Ma L.-J."/>
            <person name="Wortman J.R."/>
            <person name="Batzoglou S."/>
            <person name="Lee S.-I."/>
            <person name="Bastuerkmen M."/>
            <person name="Spevak C.C."/>
            <person name="Clutterbuck J."/>
            <person name="Kapitonov V."/>
            <person name="Jurka J."/>
            <person name="Scazzocchio C."/>
            <person name="Farman M.L."/>
            <person name="Butler J."/>
            <person name="Purcell S."/>
            <person name="Harris S."/>
            <person name="Braus G.H."/>
            <person name="Draht O."/>
            <person name="Busch S."/>
            <person name="D'Enfert C."/>
            <person name="Bouchier C."/>
            <person name="Goldman G.H."/>
            <person name="Bell-Pedersen D."/>
            <person name="Griffiths-Jones S."/>
            <person name="Doonan J.H."/>
            <person name="Yu J."/>
            <person name="Vienken K."/>
            <person name="Pain A."/>
            <person name="Freitag M."/>
            <person name="Selker E.U."/>
            <person name="Archer D.B."/>
            <person name="Penalva M.A."/>
            <person name="Oakley B.R."/>
            <person name="Momany M."/>
            <person name="Tanaka T."/>
            <person name="Kumagai T."/>
            <person name="Asai K."/>
            <person name="Machida M."/>
            <person name="Nierman W.C."/>
            <person name="Denning D.W."/>
            <person name="Caddick M.X."/>
            <person name="Hynes M."/>
            <person name="Paoletti M."/>
            <person name="Fischer R."/>
            <person name="Miller B.L."/>
            <person name="Dyer P.S."/>
            <person name="Sachs M.S."/>
            <person name="Osmani S.A."/>
            <person name="Birren B.W."/>
        </authorList>
    </citation>
    <scope>NUCLEOTIDE SEQUENCE [LARGE SCALE GENOMIC DNA]</scope>
    <source>
        <strain>FGSC A4 / ATCC 38163 / CBS 112.46 / NRRL 194 / M139</strain>
    </source>
</reference>
<reference key="2">
    <citation type="journal article" date="2009" name="Fungal Genet. Biol.">
        <title>The 2008 update of the Aspergillus nidulans genome annotation: a community effort.</title>
        <authorList>
            <person name="Wortman J.R."/>
            <person name="Gilsenan J.M."/>
            <person name="Joardar V."/>
            <person name="Deegan J."/>
            <person name="Clutterbuck J."/>
            <person name="Andersen M.R."/>
            <person name="Archer D."/>
            <person name="Bencina M."/>
            <person name="Braus G."/>
            <person name="Coutinho P."/>
            <person name="von Dohren H."/>
            <person name="Doonan J."/>
            <person name="Driessen A.J."/>
            <person name="Durek P."/>
            <person name="Espeso E."/>
            <person name="Fekete E."/>
            <person name="Flipphi M."/>
            <person name="Estrada C.G."/>
            <person name="Geysens S."/>
            <person name="Goldman G."/>
            <person name="de Groot P.W."/>
            <person name="Hansen K."/>
            <person name="Harris S.D."/>
            <person name="Heinekamp T."/>
            <person name="Helmstaedt K."/>
            <person name="Henrissat B."/>
            <person name="Hofmann G."/>
            <person name="Homan T."/>
            <person name="Horio T."/>
            <person name="Horiuchi H."/>
            <person name="James S."/>
            <person name="Jones M."/>
            <person name="Karaffa L."/>
            <person name="Karanyi Z."/>
            <person name="Kato M."/>
            <person name="Keller N."/>
            <person name="Kelly D.E."/>
            <person name="Kiel J.A."/>
            <person name="Kim J.M."/>
            <person name="van der Klei I.J."/>
            <person name="Klis F.M."/>
            <person name="Kovalchuk A."/>
            <person name="Krasevec N."/>
            <person name="Kubicek C.P."/>
            <person name="Liu B."/>
            <person name="Maccabe A."/>
            <person name="Meyer V."/>
            <person name="Mirabito P."/>
            <person name="Miskei M."/>
            <person name="Mos M."/>
            <person name="Mullins J."/>
            <person name="Nelson D.R."/>
            <person name="Nielsen J."/>
            <person name="Oakley B.R."/>
            <person name="Osmani S.A."/>
            <person name="Pakula T."/>
            <person name="Paszewski A."/>
            <person name="Paulsen I."/>
            <person name="Pilsyk S."/>
            <person name="Pocsi I."/>
            <person name="Punt P.J."/>
            <person name="Ram A.F."/>
            <person name="Ren Q."/>
            <person name="Robellet X."/>
            <person name="Robson G."/>
            <person name="Seiboth B."/>
            <person name="van Solingen P."/>
            <person name="Specht T."/>
            <person name="Sun J."/>
            <person name="Taheri-Talesh N."/>
            <person name="Takeshita N."/>
            <person name="Ussery D."/>
            <person name="vanKuyk P.A."/>
            <person name="Visser H."/>
            <person name="van de Vondervoort P.J."/>
            <person name="de Vries R.P."/>
            <person name="Walton J."/>
            <person name="Xiang X."/>
            <person name="Xiong Y."/>
            <person name="Zeng A.P."/>
            <person name="Brandt B.W."/>
            <person name="Cornell M.J."/>
            <person name="van den Hondel C.A."/>
            <person name="Visser J."/>
            <person name="Oliver S.G."/>
            <person name="Turner G."/>
        </authorList>
    </citation>
    <scope>GENOME REANNOTATION</scope>
    <source>
        <strain>FGSC A4 / ATCC 38163 / CBS 112.46 / NRRL 194 / M139</strain>
    </source>
</reference>
<name>TMEDA_EMENI</name>
<sequence>MGSSRLAMRSALGLFFLLFVQISLALKFDIAAGKGERCIRNFVLKDQLVVVTAIVSGERGDGQMVNMHIKDSMGNDHGRPKDVIGETRQAFTSAGDTTFDVCFENTLVSRRGISNPHRSIELDVDIGADARDWSNIQAQEKLKPIETDLRRIEEIVAEVVSEMEYLRAREQKLRDTNESTNERVKWFAFGTMGMLVGLGVWQVIYLRAYFRSKHLI</sequence>
<dbReference type="EMBL" id="AACD01000067">
    <property type="protein sequence ID" value="EAA59426.1"/>
    <property type="molecule type" value="Genomic_DNA"/>
</dbReference>
<dbReference type="EMBL" id="BN001302">
    <property type="protein sequence ID" value="CBF74572.1"/>
    <property type="molecule type" value="Genomic_DNA"/>
</dbReference>
<dbReference type="RefSeq" id="XP_661769.1">
    <property type="nucleotide sequence ID" value="XM_656677.1"/>
</dbReference>
<dbReference type="SMR" id="Q5B5L5"/>
<dbReference type="FunCoup" id="Q5B5L5">
    <property type="interactions" value="1116"/>
</dbReference>
<dbReference type="STRING" id="227321.Q5B5L5"/>
<dbReference type="EnsemblFungi" id="CBF74572">
    <property type="protein sequence ID" value="CBF74572"/>
    <property type="gene ID" value="ANIA_04165"/>
</dbReference>
<dbReference type="KEGG" id="ani:ANIA_04165"/>
<dbReference type="VEuPathDB" id="FungiDB:AN4165"/>
<dbReference type="eggNOG" id="KOG1691">
    <property type="taxonomic scope" value="Eukaryota"/>
</dbReference>
<dbReference type="HOGENOM" id="CLU_066963_3_0_1"/>
<dbReference type="InParanoid" id="Q5B5L5"/>
<dbReference type="OMA" id="DVFEACF"/>
<dbReference type="OrthoDB" id="759142at2759"/>
<dbReference type="Proteomes" id="UP000000560">
    <property type="component" value="Chromosome II"/>
</dbReference>
<dbReference type="GO" id="GO:0030134">
    <property type="term" value="C:COPII-coated ER to Golgi transport vesicle"/>
    <property type="evidence" value="ECO:0000318"/>
    <property type="project" value="GO_Central"/>
</dbReference>
<dbReference type="GO" id="GO:0005783">
    <property type="term" value="C:endoplasmic reticulum"/>
    <property type="evidence" value="ECO:0000318"/>
    <property type="project" value="GO_Central"/>
</dbReference>
<dbReference type="GO" id="GO:0005789">
    <property type="term" value="C:endoplasmic reticulum membrane"/>
    <property type="evidence" value="ECO:0007669"/>
    <property type="project" value="UniProtKB-SubCell"/>
</dbReference>
<dbReference type="GO" id="GO:0005793">
    <property type="term" value="C:endoplasmic reticulum-Golgi intermediate compartment"/>
    <property type="evidence" value="ECO:0000318"/>
    <property type="project" value="GO_Central"/>
</dbReference>
<dbReference type="GO" id="GO:0005794">
    <property type="term" value="C:Golgi apparatus"/>
    <property type="evidence" value="ECO:0000318"/>
    <property type="project" value="GO_Central"/>
</dbReference>
<dbReference type="GO" id="GO:0000139">
    <property type="term" value="C:Golgi membrane"/>
    <property type="evidence" value="ECO:0007669"/>
    <property type="project" value="UniProtKB-SubCell"/>
</dbReference>
<dbReference type="GO" id="GO:0006888">
    <property type="term" value="P:endoplasmic reticulum to Golgi vesicle-mediated transport"/>
    <property type="evidence" value="ECO:0000318"/>
    <property type="project" value="GO_Central"/>
</dbReference>
<dbReference type="GO" id="GO:0007030">
    <property type="term" value="P:Golgi organization"/>
    <property type="evidence" value="ECO:0000318"/>
    <property type="project" value="GO_Central"/>
</dbReference>
<dbReference type="GO" id="GO:0006886">
    <property type="term" value="P:intracellular protein transport"/>
    <property type="evidence" value="ECO:0000318"/>
    <property type="project" value="GO_Central"/>
</dbReference>
<dbReference type="InterPro" id="IPR015720">
    <property type="entry name" value="Emp24-like"/>
</dbReference>
<dbReference type="InterPro" id="IPR009038">
    <property type="entry name" value="GOLD_dom"/>
</dbReference>
<dbReference type="PANTHER" id="PTHR22811">
    <property type="entry name" value="TRANSMEMBRANE EMP24 DOMAIN-CONTAINING PROTEIN"/>
    <property type="match status" value="1"/>
</dbReference>
<dbReference type="Pfam" id="PF01105">
    <property type="entry name" value="EMP24_GP25L"/>
    <property type="match status" value="1"/>
</dbReference>
<dbReference type="SMART" id="SM01190">
    <property type="entry name" value="EMP24_GP25L"/>
    <property type="match status" value="1"/>
</dbReference>
<gene>
    <name type="primary">erv25</name>
    <name type="ORF">AN4165</name>
</gene>
<organism>
    <name type="scientific">Emericella nidulans (strain FGSC A4 / ATCC 38163 / CBS 112.46 / NRRL 194 / M139)</name>
    <name type="common">Aspergillus nidulans</name>
    <dbReference type="NCBI Taxonomy" id="227321"/>
    <lineage>
        <taxon>Eukaryota</taxon>
        <taxon>Fungi</taxon>
        <taxon>Dikarya</taxon>
        <taxon>Ascomycota</taxon>
        <taxon>Pezizomycotina</taxon>
        <taxon>Eurotiomycetes</taxon>
        <taxon>Eurotiomycetidae</taxon>
        <taxon>Eurotiales</taxon>
        <taxon>Aspergillaceae</taxon>
        <taxon>Aspergillus</taxon>
        <taxon>Aspergillus subgen. Nidulantes</taxon>
    </lineage>
</organism>
<protein>
    <recommendedName>
        <fullName>Endoplasmic reticulum vesicle protein 25</fullName>
    </recommendedName>
</protein>
<evidence type="ECO:0000250" key="1"/>
<evidence type="ECO:0000255" key="2"/>
<evidence type="ECO:0000305" key="3"/>